<organism>
    <name type="scientific">Rickettsia massiliae (strain Mtu5)</name>
    <dbReference type="NCBI Taxonomy" id="416276"/>
    <lineage>
        <taxon>Bacteria</taxon>
        <taxon>Pseudomonadati</taxon>
        <taxon>Pseudomonadota</taxon>
        <taxon>Alphaproteobacteria</taxon>
        <taxon>Rickettsiales</taxon>
        <taxon>Rickettsiaceae</taxon>
        <taxon>Rickettsieae</taxon>
        <taxon>Rickettsia</taxon>
        <taxon>spotted fever group</taxon>
    </lineage>
</organism>
<proteinExistence type="inferred from homology"/>
<dbReference type="EMBL" id="CP000683">
    <property type="protein sequence ID" value="ABV84476.1"/>
    <property type="status" value="ALT_INIT"/>
    <property type="molecule type" value="Genomic_DNA"/>
</dbReference>
<dbReference type="RefSeq" id="WP_041404500.1">
    <property type="nucleotide sequence ID" value="NC_009900.1"/>
</dbReference>
<dbReference type="SMR" id="A8F0P0"/>
<dbReference type="KEGG" id="rms:RMA_0182"/>
<dbReference type="HOGENOM" id="CLU_002794_4_1_5"/>
<dbReference type="Proteomes" id="UP000001311">
    <property type="component" value="Chromosome"/>
</dbReference>
<dbReference type="GO" id="GO:0005737">
    <property type="term" value="C:cytoplasm"/>
    <property type="evidence" value="ECO:0007669"/>
    <property type="project" value="UniProtKB-SubCell"/>
</dbReference>
<dbReference type="GO" id="GO:0005525">
    <property type="term" value="F:GTP binding"/>
    <property type="evidence" value="ECO:0007669"/>
    <property type="project" value="UniProtKB-UniRule"/>
</dbReference>
<dbReference type="GO" id="GO:0003924">
    <property type="term" value="F:GTPase activity"/>
    <property type="evidence" value="ECO:0007669"/>
    <property type="project" value="InterPro"/>
</dbReference>
<dbReference type="GO" id="GO:0003746">
    <property type="term" value="F:translation elongation factor activity"/>
    <property type="evidence" value="ECO:0007669"/>
    <property type="project" value="UniProtKB-UniRule"/>
</dbReference>
<dbReference type="GO" id="GO:0032790">
    <property type="term" value="P:ribosome disassembly"/>
    <property type="evidence" value="ECO:0007669"/>
    <property type="project" value="TreeGrafter"/>
</dbReference>
<dbReference type="CDD" id="cd01886">
    <property type="entry name" value="EF-G"/>
    <property type="match status" value="1"/>
</dbReference>
<dbReference type="CDD" id="cd16262">
    <property type="entry name" value="EFG_III"/>
    <property type="match status" value="1"/>
</dbReference>
<dbReference type="CDD" id="cd01434">
    <property type="entry name" value="EFG_mtEFG1_IV"/>
    <property type="match status" value="1"/>
</dbReference>
<dbReference type="CDD" id="cd03713">
    <property type="entry name" value="EFG_mtEFG_C"/>
    <property type="match status" value="1"/>
</dbReference>
<dbReference type="CDD" id="cd04088">
    <property type="entry name" value="EFG_mtEFG_II"/>
    <property type="match status" value="1"/>
</dbReference>
<dbReference type="FunFam" id="2.40.30.10:FF:000006">
    <property type="entry name" value="Elongation factor G"/>
    <property type="match status" value="1"/>
</dbReference>
<dbReference type="FunFam" id="3.30.230.10:FF:000003">
    <property type="entry name" value="Elongation factor G"/>
    <property type="match status" value="1"/>
</dbReference>
<dbReference type="FunFam" id="3.30.70.240:FF:000001">
    <property type="entry name" value="Elongation factor G"/>
    <property type="match status" value="1"/>
</dbReference>
<dbReference type="FunFam" id="3.30.70.870:FF:000001">
    <property type="entry name" value="Elongation factor G"/>
    <property type="match status" value="1"/>
</dbReference>
<dbReference type="FunFam" id="3.40.50.300:FF:000029">
    <property type="entry name" value="Elongation factor G"/>
    <property type="match status" value="1"/>
</dbReference>
<dbReference type="Gene3D" id="3.30.230.10">
    <property type="match status" value="1"/>
</dbReference>
<dbReference type="Gene3D" id="3.30.70.240">
    <property type="match status" value="1"/>
</dbReference>
<dbReference type="Gene3D" id="3.30.70.870">
    <property type="entry name" value="Elongation Factor G (Translational Gtpase), domain 3"/>
    <property type="match status" value="1"/>
</dbReference>
<dbReference type="Gene3D" id="3.40.50.300">
    <property type="entry name" value="P-loop containing nucleotide triphosphate hydrolases"/>
    <property type="match status" value="1"/>
</dbReference>
<dbReference type="Gene3D" id="2.40.30.10">
    <property type="entry name" value="Translation factors"/>
    <property type="match status" value="1"/>
</dbReference>
<dbReference type="HAMAP" id="MF_00054_B">
    <property type="entry name" value="EF_G_EF_2_B"/>
    <property type="match status" value="1"/>
</dbReference>
<dbReference type="InterPro" id="IPR053905">
    <property type="entry name" value="EF-G-like_DII"/>
</dbReference>
<dbReference type="InterPro" id="IPR041095">
    <property type="entry name" value="EFG_II"/>
</dbReference>
<dbReference type="InterPro" id="IPR009022">
    <property type="entry name" value="EFG_III"/>
</dbReference>
<dbReference type="InterPro" id="IPR035647">
    <property type="entry name" value="EFG_III/V"/>
</dbReference>
<dbReference type="InterPro" id="IPR047872">
    <property type="entry name" value="EFG_IV"/>
</dbReference>
<dbReference type="InterPro" id="IPR035649">
    <property type="entry name" value="EFG_V"/>
</dbReference>
<dbReference type="InterPro" id="IPR000640">
    <property type="entry name" value="EFG_V-like"/>
</dbReference>
<dbReference type="InterPro" id="IPR031157">
    <property type="entry name" value="G_TR_CS"/>
</dbReference>
<dbReference type="InterPro" id="IPR027417">
    <property type="entry name" value="P-loop_NTPase"/>
</dbReference>
<dbReference type="InterPro" id="IPR020568">
    <property type="entry name" value="Ribosomal_Su5_D2-typ_SF"/>
</dbReference>
<dbReference type="InterPro" id="IPR014721">
    <property type="entry name" value="Ribsml_uS5_D2-typ_fold_subgr"/>
</dbReference>
<dbReference type="InterPro" id="IPR005225">
    <property type="entry name" value="Small_GTP-bd"/>
</dbReference>
<dbReference type="InterPro" id="IPR000795">
    <property type="entry name" value="T_Tr_GTP-bd_dom"/>
</dbReference>
<dbReference type="InterPro" id="IPR009000">
    <property type="entry name" value="Transl_B-barrel_sf"/>
</dbReference>
<dbReference type="InterPro" id="IPR004540">
    <property type="entry name" value="Transl_elong_EFG/EF2"/>
</dbReference>
<dbReference type="InterPro" id="IPR005517">
    <property type="entry name" value="Transl_elong_EFG/EF2_IV"/>
</dbReference>
<dbReference type="NCBIfam" id="TIGR00484">
    <property type="entry name" value="EF-G"/>
    <property type="match status" value="1"/>
</dbReference>
<dbReference type="NCBIfam" id="NF009381">
    <property type="entry name" value="PRK12740.1-5"/>
    <property type="match status" value="1"/>
</dbReference>
<dbReference type="NCBIfam" id="TIGR00231">
    <property type="entry name" value="small_GTP"/>
    <property type="match status" value="1"/>
</dbReference>
<dbReference type="PANTHER" id="PTHR43261:SF1">
    <property type="entry name" value="RIBOSOME-RELEASING FACTOR 2, MITOCHONDRIAL"/>
    <property type="match status" value="1"/>
</dbReference>
<dbReference type="PANTHER" id="PTHR43261">
    <property type="entry name" value="TRANSLATION ELONGATION FACTOR G-RELATED"/>
    <property type="match status" value="1"/>
</dbReference>
<dbReference type="Pfam" id="PF22042">
    <property type="entry name" value="EF-G_D2"/>
    <property type="match status" value="1"/>
</dbReference>
<dbReference type="Pfam" id="PF00679">
    <property type="entry name" value="EFG_C"/>
    <property type="match status" value="1"/>
</dbReference>
<dbReference type="Pfam" id="PF14492">
    <property type="entry name" value="EFG_III"/>
    <property type="match status" value="1"/>
</dbReference>
<dbReference type="Pfam" id="PF03764">
    <property type="entry name" value="EFG_IV"/>
    <property type="match status" value="1"/>
</dbReference>
<dbReference type="Pfam" id="PF00009">
    <property type="entry name" value="GTP_EFTU"/>
    <property type="match status" value="1"/>
</dbReference>
<dbReference type="PRINTS" id="PR00315">
    <property type="entry name" value="ELONGATNFCT"/>
</dbReference>
<dbReference type="SMART" id="SM00838">
    <property type="entry name" value="EFG_C"/>
    <property type="match status" value="1"/>
</dbReference>
<dbReference type="SMART" id="SM00889">
    <property type="entry name" value="EFG_IV"/>
    <property type="match status" value="1"/>
</dbReference>
<dbReference type="SUPFAM" id="SSF54980">
    <property type="entry name" value="EF-G C-terminal domain-like"/>
    <property type="match status" value="2"/>
</dbReference>
<dbReference type="SUPFAM" id="SSF52540">
    <property type="entry name" value="P-loop containing nucleoside triphosphate hydrolases"/>
    <property type="match status" value="1"/>
</dbReference>
<dbReference type="SUPFAM" id="SSF54211">
    <property type="entry name" value="Ribosomal protein S5 domain 2-like"/>
    <property type="match status" value="1"/>
</dbReference>
<dbReference type="SUPFAM" id="SSF50447">
    <property type="entry name" value="Translation proteins"/>
    <property type="match status" value="1"/>
</dbReference>
<dbReference type="PROSITE" id="PS00301">
    <property type="entry name" value="G_TR_1"/>
    <property type="match status" value="1"/>
</dbReference>
<dbReference type="PROSITE" id="PS51722">
    <property type="entry name" value="G_TR_2"/>
    <property type="match status" value="1"/>
</dbReference>
<name>EFG_RICM5</name>
<sequence length="697" mass="77401">MSKINKLEHIRNIGICAHIDAGKTTTTERILYYTGKSHKIGEVHEGGATMDWMEQEQERGITITSAATTCRWQDKIINIIDTPGHVDFTIEVERSLRVLDGAVAVFDGVAGVEPQSETVWRQADKYNVPRMCFVNKMDRMGADFYRCVEMLKDRLGAKPLVIQLPVGIEENFKGIIDLVKMKVVIWKDESLGAEYFEEDIPADMKDKAEEYRAKLLDMVVELDDHVMEKYLSGEEVTAEEIKRLIRKGTISAAFYPVLCGSAFKNKGVQPLLDAVVDFLPSPTDIGIVKGMEVSTGEEKDFPISVTEPFAALAFKIMNDPFVGSLTFIRIYSGKITSGTTVINTVKNKREKIGRMLLMHSNNREDVKEASAGDIVALAGLKDTTTGDTLSDIDQPVILERMEFPEPVIELAVEPKSTADQEKMGLALSRLAAEDPSFRVSTDHETGQTVIKGMGELHLEIIIDRMRREFKVEANIGAPQVAYRETITKACEIDYTHKKQSGGAGQFARVKIIFEPLKDVKDLKDEDKIFVFESKIIGGAVPKEYIPGVEKGLNNIRETGVIAGYPMIDFKATLVDGAFHDVDSSVLAFEIAAKAAFREGMPKGNPKLLEPIMQVEVITPDEYMGDIIGDLNSRRGQIQSMDPRGNAQVVTANVPLAEMFGYVNTLRSLSQGRAQFSMIFSHYDQVPSQVADIIKAKK</sequence>
<comment type="function">
    <text evidence="1">Catalyzes the GTP-dependent ribosomal translocation step during translation elongation. During this step, the ribosome changes from the pre-translocational (PRE) to the post-translocational (POST) state as the newly formed A-site-bound peptidyl-tRNA and P-site-bound deacylated tRNA move to the P and E sites, respectively. Catalyzes the coordinated movement of the two tRNA molecules, the mRNA and conformational changes in the ribosome.</text>
</comment>
<comment type="subcellular location">
    <subcellularLocation>
        <location evidence="1">Cytoplasm</location>
    </subcellularLocation>
</comment>
<comment type="similarity">
    <text evidence="1">Belongs to the TRAFAC class translation factor GTPase superfamily. Classic translation factor GTPase family. EF-G/EF-2 subfamily.</text>
</comment>
<comment type="sequence caution" evidence="2">
    <conflict type="erroneous initiation">
        <sequence resource="EMBL-CDS" id="ABV84476"/>
    </conflict>
</comment>
<gene>
    <name evidence="1" type="primary">fusA</name>
    <name type="ordered locus">RMA_0182</name>
</gene>
<evidence type="ECO:0000255" key="1">
    <source>
        <dbReference type="HAMAP-Rule" id="MF_00054"/>
    </source>
</evidence>
<evidence type="ECO:0000305" key="2"/>
<accession>A8F0P0</accession>
<keyword id="KW-0963">Cytoplasm</keyword>
<keyword id="KW-0251">Elongation factor</keyword>
<keyword id="KW-0342">GTP-binding</keyword>
<keyword id="KW-0547">Nucleotide-binding</keyword>
<keyword id="KW-0648">Protein biosynthesis</keyword>
<protein>
    <recommendedName>
        <fullName evidence="1">Elongation factor G</fullName>
        <shortName evidence="1">EF-G</shortName>
    </recommendedName>
</protein>
<reference key="1">
    <citation type="journal article" date="2007" name="Genome Res.">
        <title>Lateral gene transfer between obligate intracellular bacteria: evidence from the Rickettsia massiliae genome.</title>
        <authorList>
            <person name="Blanc G."/>
            <person name="Ogata H."/>
            <person name="Robert C."/>
            <person name="Audic S."/>
            <person name="Claverie J.-M."/>
            <person name="Raoult D."/>
        </authorList>
    </citation>
    <scope>NUCLEOTIDE SEQUENCE [LARGE SCALE GENOMIC DNA]</scope>
    <source>
        <strain>Mtu5</strain>
    </source>
</reference>
<feature type="chain" id="PRO_0000335853" description="Elongation factor G">
    <location>
        <begin position="1"/>
        <end position="697"/>
    </location>
</feature>
<feature type="domain" description="tr-type G">
    <location>
        <begin position="8"/>
        <end position="283"/>
    </location>
</feature>
<feature type="binding site" evidence="1">
    <location>
        <begin position="17"/>
        <end position="24"/>
    </location>
    <ligand>
        <name>GTP</name>
        <dbReference type="ChEBI" id="CHEBI:37565"/>
    </ligand>
</feature>
<feature type="binding site" evidence="1">
    <location>
        <begin position="81"/>
        <end position="85"/>
    </location>
    <ligand>
        <name>GTP</name>
        <dbReference type="ChEBI" id="CHEBI:37565"/>
    </ligand>
</feature>
<feature type="binding site" evidence="1">
    <location>
        <begin position="135"/>
        <end position="138"/>
    </location>
    <ligand>
        <name>GTP</name>
        <dbReference type="ChEBI" id="CHEBI:37565"/>
    </ligand>
</feature>